<protein>
    <recommendedName>
        <fullName>Probable ribosome biogenesis protein RLP24</fullName>
    </recommendedName>
    <alternativeName>
        <fullName>Ribosomal L24 domain-containing protein 1</fullName>
    </alternativeName>
</protein>
<sequence length="163" mass="19597">MRIEKCYFCSGPIYPGHGMMFVRNDCKVFRFCKSKCHKNFKKKRNPRKVRWTKAFRKAAGKELTVDNSFEFEKRRNEPVKYQRELWNKTIDAMKRVEEIKQKRQAKFIMNRLKKNKELQKVQDVKEVKQNIHLIRAPLAGKGKQLEDKMVQKLQEDVDMEDVS</sequence>
<dbReference type="EMBL" id="BC103265">
    <property type="protein sequence ID" value="AAI03266.1"/>
    <property type="molecule type" value="mRNA"/>
</dbReference>
<dbReference type="RefSeq" id="NP_001073824.1">
    <property type="nucleotide sequence ID" value="NM_001080355.2"/>
</dbReference>
<dbReference type="RefSeq" id="XP_059746667.1">
    <property type="nucleotide sequence ID" value="XM_059890684.1"/>
</dbReference>
<dbReference type="RefSeq" id="XP_059746668.1">
    <property type="nucleotide sequence ID" value="XM_059890685.1"/>
</dbReference>
<dbReference type="SMR" id="Q3SZ12"/>
<dbReference type="FunCoup" id="Q3SZ12">
    <property type="interactions" value="3735"/>
</dbReference>
<dbReference type="STRING" id="9913.ENSBTAP00000001767"/>
<dbReference type="PaxDb" id="9913-ENSBTAP00000001767"/>
<dbReference type="GeneID" id="783948"/>
<dbReference type="KEGG" id="bta:783948"/>
<dbReference type="CTD" id="51187"/>
<dbReference type="VEuPathDB" id="HostDB:ENSBTAG00000001342"/>
<dbReference type="eggNOG" id="KOG1723">
    <property type="taxonomic scope" value="Eukaryota"/>
</dbReference>
<dbReference type="HOGENOM" id="CLU_089419_2_2_1"/>
<dbReference type="InParanoid" id="Q3SZ12"/>
<dbReference type="OMA" id="TCYFCSG"/>
<dbReference type="OrthoDB" id="10262490at2759"/>
<dbReference type="TreeFam" id="TF314926"/>
<dbReference type="Proteomes" id="UP000009136">
    <property type="component" value="Chromosome 10"/>
</dbReference>
<dbReference type="Bgee" id="ENSBTAG00000001342">
    <property type="expression patterns" value="Expressed in omasum and 106 other cell types or tissues"/>
</dbReference>
<dbReference type="GO" id="GO:0005730">
    <property type="term" value="C:nucleolus"/>
    <property type="evidence" value="ECO:0000318"/>
    <property type="project" value="GO_Central"/>
</dbReference>
<dbReference type="GO" id="GO:0003735">
    <property type="term" value="F:structural constituent of ribosome"/>
    <property type="evidence" value="ECO:0007669"/>
    <property type="project" value="InterPro"/>
</dbReference>
<dbReference type="GO" id="GO:0042273">
    <property type="term" value="P:ribosomal large subunit biogenesis"/>
    <property type="evidence" value="ECO:0000318"/>
    <property type="project" value="GO_Central"/>
</dbReference>
<dbReference type="CDD" id="cd00472">
    <property type="entry name" value="Ribosomal_L24e_L24"/>
    <property type="match status" value="1"/>
</dbReference>
<dbReference type="FunFam" id="2.30.170.20:FF:000001">
    <property type="entry name" value="probable ribosome biogenesis protein RLP24"/>
    <property type="match status" value="1"/>
</dbReference>
<dbReference type="Gene3D" id="2.30.170.20">
    <property type="entry name" value="Ribosomal protein L24e"/>
    <property type="match status" value="1"/>
</dbReference>
<dbReference type="HAMAP" id="MF_00773">
    <property type="entry name" value="Ribosomal_eL24"/>
    <property type="match status" value="1"/>
</dbReference>
<dbReference type="InterPro" id="IPR038630">
    <property type="entry name" value="L24e/L24_sf"/>
</dbReference>
<dbReference type="InterPro" id="IPR056366">
    <property type="entry name" value="Ribosomal_eL24"/>
</dbReference>
<dbReference type="InterPro" id="IPR055345">
    <property type="entry name" value="Ribosomal_eL24-rel_arc"/>
</dbReference>
<dbReference type="InterPro" id="IPR000988">
    <property type="entry name" value="Ribosomal_eL24-rel_N"/>
</dbReference>
<dbReference type="InterPro" id="IPR023442">
    <property type="entry name" value="Ribosomal_eL24_CS"/>
</dbReference>
<dbReference type="InterPro" id="IPR011017">
    <property type="entry name" value="TRASH_dom"/>
</dbReference>
<dbReference type="PANTHER" id="PTHR10792">
    <property type="entry name" value="60S RIBOSOMAL PROTEIN L24"/>
    <property type="match status" value="1"/>
</dbReference>
<dbReference type="PANTHER" id="PTHR10792:SF53">
    <property type="entry name" value="RIBOSOME BIOGENESIS PROTEIN RLP24-RELATED"/>
    <property type="match status" value="1"/>
</dbReference>
<dbReference type="Pfam" id="PF01246">
    <property type="entry name" value="Ribosomal_L24e"/>
    <property type="match status" value="1"/>
</dbReference>
<dbReference type="SMART" id="SM00746">
    <property type="entry name" value="TRASH"/>
    <property type="match status" value="1"/>
</dbReference>
<dbReference type="SUPFAM" id="SSF57716">
    <property type="entry name" value="Glucocorticoid receptor-like (DNA-binding domain)"/>
    <property type="match status" value="1"/>
</dbReference>
<dbReference type="PROSITE" id="PS01073">
    <property type="entry name" value="RIBOSOMAL_L24E"/>
    <property type="match status" value="1"/>
</dbReference>
<name>RLP24_BOVIN</name>
<evidence type="ECO:0000250" key="1">
    <source>
        <dbReference type="UniProtKB" id="Q07915"/>
    </source>
</evidence>
<evidence type="ECO:0000250" key="2">
    <source>
        <dbReference type="UniProtKB" id="Q9UHA3"/>
    </source>
</evidence>
<evidence type="ECO:0000305" key="3"/>
<reference key="1">
    <citation type="submission" date="2005-08" db="EMBL/GenBank/DDBJ databases">
        <authorList>
            <consortium name="NIH - Mammalian Gene Collection (MGC) project"/>
        </authorList>
    </citation>
    <scope>NUCLEOTIDE SEQUENCE [LARGE SCALE MRNA]</scope>
    <source>
        <strain>Hereford</strain>
        <tissue>Hypothalamus</tissue>
    </source>
</reference>
<feature type="chain" id="PRO_0000240145" description="Probable ribosome biogenesis protein RLP24">
    <location>
        <begin position="1"/>
        <end position="163"/>
    </location>
</feature>
<keyword id="KW-0539">Nucleus</keyword>
<keyword id="KW-1185">Reference proteome</keyword>
<keyword id="KW-0690">Ribosome biogenesis</keyword>
<proteinExistence type="evidence at transcript level"/>
<organism>
    <name type="scientific">Bos taurus</name>
    <name type="common">Bovine</name>
    <dbReference type="NCBI Taxonomy" id="9913"/>
    <lineage>
        <taxon>Eukaryota</taxon>
        <taxon>Metazoa</taxon>
        <taxon>Chordata</taxon>
        <taxon>Craniata</taxon>
        <taxon>Vertebrata</taxon>
        <taxon>Euteleostomi</taxon>
        <taxon>Mammalia</taxon>
        <taxon>Eutheria</taxon>
        <taxon>Laurasiatheria</taxon>
        <taxon>Artiodactyla</taxon>
        <taxon>Ruminantia</taxon>
        <taxon>Pecora</taxon>
        <taxon>Bovidae</taxon>
        <taxon>Bovinae</taxon>
        <taxon>Bos</taxon>
    </lineage>
</organism>
<comment type="function">
    <text evidence="1">Involved in the biogenesis of the 60S ribosomal subunit. Ensures the docking of GTPBP4/NOG1 to pre-60S particles (By similarity).</text>
</comment>
<comment type="subunit">
    <text evidence="1 2">Associated with nucleolar and cytoplasmic pre-60S particles (By similarity). At the end of biogenesis it dissociates from cytoplasmic pre-60S particles and is likely to be exchanged for its ribosomal homolog, RPL24 (By similarity).</text>
</comment>
<comment type="subcellular location">
    <subcellularLocation>
        <location evidence="2">Nucleus</location>
        <location evidence="2">Nucleolus</location>
    </subcellularLocation>
</comment>
<comment type="similarity">
    <text evidence="3">Belongs to the eukaryotic ribosomal protein eL24 family.</text>
</comment>
<gene>
    <name type="primary">RSL24D1</name>
</gene>
<accession>Q3SZ12</accession>